<evidence type="ECO:0000255" key="1">
    <source>
        <dbReference type="HAMAP-Rule" id="MF_00668"/>
    </source>
</evidence>
<name>BIOW_METIM</name>
<protein>
    <recommendedName>
        <fullName evidence="1">6-carboxyhexanoate--CoA ligase</fullName>
        <ecNumber evidence="1">6.2.1.14</ecNumber>
    </recommendedName>
    <alternativeName>
        <fullName evidence="1">Pimeloyl-CoA synthase</fullName>
    </alternativeName>
</protein>
<keyword id="KW-0067">ATP-binding</keyword>
<keyword id="KW-0093">Biotin biosynthesis</keyword>
<keyword id="KW-0436">Ligase</keyword>
<keyword id="KW-0460">Magnesium</keyword>
<keyword id="KW-0547">Nucleotide-binding</keyword>
<gene>
    <name evidence="1" type="primary">bioW</name>
    <name type="ordered locus">Metin_0084</name>
</gene>
<organism>
    <name type="scientific">Methanocaldococcus infernus (strain DSM 11812 / JCM 15783 / ME)</name>
    <dbReference type="NCBI Taxonomy" id="573063"/>
    <lineage>
        <taxon>Archaea</taxon>
        <taxon>Methanobacteriati</taxon>
        <taxon>Methanobacteriota</taxon>
        <taxon>Methanomada group</taxon>
        <taxon>Methanococci</taxon>
        <taxon>Methanococcales</taxon>
        <taxon>Methanocaldococcaceae</taxon>
        <taxon>Methanocaldococcus</taxon>
    </lineage>
</organism>
<proteinExistence type="inferred from homology"/>
<reference key="1">
    <citation type="submission" date="2010-04" db="EMBL/GenBank/DDBJ databases">
        <title>Complete sequence of Methanocaldococcus infernus ME.</title>
        <authorList>
            <consortium name="US DOE Joint Genome Institute"/>
            <person name="Lucas S."/>
            <person name="Copeland A."/>
            <person name="Lapidus A."/>
            <person name="Cheng J.-F."/>
            <person name="Bruce D."/>
            <person name="Goodwin L."/>
            <person name="Pitluck S."/>
            <person name="Munk A.C."/>
            <person name="Detter J.C."/>
            <person name="Han C."/>
            <person name="Tapia R."/>
            <person name="Land M."/>
            <person name="Hauser L."/>
            <person name="Kyrpides N."/>
            <person name="Mikhailova N."/>
            <person name="Sieprawska-Lupa M."/>
            <person name="Whitman W.B."/>
            <person name="Woyke T."/>
        </authorList>
    </citation>
    <scope>NUCLEOTIDE SEQUENCE [LARGE SCALE GENOMIC DNA]</scope>
    <source>
        <strain>DSM 11812 / JCM 15783 / ME</strain>
    </source>
</reference>
<sequence length="226" mass="25531">MRASREGKHISGGERLVSEEKIEEAVLELLRKALTHENGKPDFINIKIEKIDKVNYIKALPIKTITCKNKKEAREVAKKILLEEGIPEEVVEKAFKIIDKGGMRGAAILNLNGERLEPDRERGVRVKNIDTSERLKEKILKEGLGTERTVDAIAIASKVIRLGIIAELCTSDNKSYTTGYVATKKGYFRITNLKNINEPGGRVFFVKDIDEELIKRLEEEAYIIDL</sequence>
<dbReference type="EC" id="6.2.1.14" evidence="1"/>
<dbReference type="EMBL" id="CP002009">
    <property type="protein sequence ID" value="ADG12756.1"/>
    <property type="molecule type" value="Genomic_DNA"/>
</dbReference>
<dbReference type="SMR" id="D5VQA3"/>
<dbReference type="STRING" id="573063.Metin_0084"/>
<dbReference type="KEGG" id="mif:Metin_0084"/>
<dbReference type="eggNOG" id="arCOG05075">
    <property type="taxonomic scope" value="Archaea"/>
</dbReference>
<dbReference type="HOGENOM" id="CLU_076858_0_0_2"/>
<dbReference type="UniPathway" id="UPA00999">
    <property type="reaction ID" value="UER00351"/>
</dbReference>
<dbReference type="Proteomes" id="UP000002061">
    <property type="component" value="Chromosome"/>
</dbReference>
<dbReference type="GO" id="GO:0042410">
    <property type="term" value="F:6-carboxyhexanoate-CoA ligase activity"/>
    <property type="evidence" value="ECO:0007669"/>
    <property type="project" value="UniProtKB-UniRule"/>
</dbReference>
<dbReference type="GO" id="GO:0005524">
    <property type="term" value="F:ATP binding"/>
    <property type="evidence" value="ECO:0007669"/>
    <property type="project" value="UniProtKB-KW"/>
</dbReference>
<dbReference type="GO" id="GO:0000287">
    <property type="term" value="F:magnesium ion binding"/>
    <property type="evidence" value="ECO:0007669"/>
    <property type="project" value="UniProtKB-UniRule"/>
</dbReference>
<dbReference type="GO" id="GO:0009102">
    <property type="term" value="P:biotin biosynthetic process"/>
    <property type="evidence" value="ECO:0007669"/>
    <property type="project" value="UniProtKB-UniRule"/>
</dbReference>
<dbReference type="HAMAP" id="MF_00668">
    <property type="entry name" value="BioW"/>
    <property type="match status" value="1"/>
</dbReference>
<dbReference type="InterPro" id="IPR005499">
    <property type="entry name" value="BioW"/>
</dbReference>
<dbReference type="NCBIfam" id="TIGR01204">
    <property type="entry name" value="bioW"/>
    <property type="match status" value="1"/>
</dbReference>
<dbReference type="NCBIfam" id="NF002360">
    <property type="entry name" value="PRK01322.1"/>
    <property type="match status" value="1"/>
</dbReference>
<dbReference type="Pfam" id="PF03744">
    <property type="entry name" value="BioW"/>
    <property type="match status" value="1"/>
</dbReference>
<accession>D5VQA3</accession>
<comment type="function">
    <text evidence="1">Catalyzes the transformation of pimelate into pimeloyl-CoA with concomitant hydrolysis of ATP to AMP.</text>
</comment>
<comment type="catalytic activity">
    <reaction evidence="1">
        <text>heptanedioate + ATP + CoA = 6-carboxyhexanoyl-CoA + AMP + diphosphate</text>
        <dbReference type="Rhea" id="RHEA:14781"/>
        <dbReference type="ChEBI" id="CHEBI:30616"/>
        <dbReference type="ChEBI" id="CHEBI:33019"/>
        <dbReference type="ChEBI" id="CHEBI:36165"/>
        <dbReference type="ChEBI" id="CHEBI:57287"/>
        <dbReference type="ChEBI" id="CHEBI:57360"/>
        <dbReference type="ChEBI" id="CHEBI:456215"/>
        <dbReference type="EC" id="6.2.1.14"/>
    </reaction>
</comment>
<comment type="cofactor">
    <cofactor evidence="1">
        <name>Mg(2+)</name>
        <dbReference type="ChEBI" id="CHEBI:18420"/>
    </cofactor>
</comment>
<comment type="pathway">
    <text evidence="1">Metabolic intermediate metabolism; pimeloyl-CoA biosynthesis; pimeloyl-CoA from pimelate: step 1/1.</text>
</comment>
<comment type="subunit">
    <text evidence="1">Homodimer.</text>
</comment>
<comment type="similarity">
    <text evidence="1">Belongs to the BioW family.</text>
</comment>
<feature type="chain" id="PRO_0000412095" description="6-carboxyhexanoate--CoA ligase">
    <location>
        <begin position="1"/>
        <end position="226"/>
    </location>
</feature>